<dbReference type="EMBL" id="AE014075">
    <property type="protein sequence ID" value="AAN81149.1"/>
    <property type="molecule type" value="Genomic_DNA"/>
</dbReference>
<dbReference type="RefSeq" id="WP_000182056.1">
    <property type="nucleotide sequence ID" value="NZ_CP051263.1"/>
</dbReference>
<dbReference type="STRING" id="199310.c2693"/>
<dbReference type="KEGG" id="ecc:c2693"/>
<dbReference type="eggNOG" id="COG2855">
    <property type="taxonomic scope" value="Bacteria"/>
</dbReference>
<dbReference type="HOGENOM" id="CLU_033541_0_0_6"/>
<dbReference type="BioCyc" id="ECOL199310:C2693-MONOMER"/>
<dbReference type="Proteomes" id="UP000001410">
    <property type="component" value="Chromosome"/>
</dbReference>
<dbReference type="GO" id="GO:0005886">
    <property type="term" value="C:plasma membrane"/>
    <property type="evidence" value="ECO:0007669"/>
    <property type="project" value="UniProtKB-SubCell"/>
</dbReference>
<dbReference type="InterPro" id="IPR018383">
    <property type="entry name" value="UPF0324_pro"/>
</dbReference>
<dbReference type="InterPro" id="IPR004630">
    <property type="entry name" value="UPF0324_YeiH-like"/>
</dbReference>
<dbReference type="NCBIfam" id="TIGR00698">
    <property type="entry name" value="YeiH family putative sulfate export transporter"/>
    <property type="match status" value="1"/>
</dbReference>
<dbReference type="PANTHER" id="PTHR30106">
    <property type="entry name" value="INNER MEMBRANE PROTEIN YEIH-RELATED"/>
    <property type="match status" value="1"/>
</dbReference>
<dbReference type="PANTHER" id="PTHR30106:SF2">
    <property type="entry name" value="UPF0324 INNER MEMBRANE PROTEIN YEIH"/>
    <property type="match status" value="1"/>
</dbReference>
<dbReference type="Pfam" id="PF03601">
    <property type="entry name" value="Cons_hypoth698"/>
    <property type="match status" value="1"/>
</dbReference>
<gene>
    <name type="primary">yeiH</name>
    <name type="ordered locus">c2693</name>
</gene>
<reference key="1">
    <citation type="journal article" date="2002" name="Proc. Natl. Acad. Sci. U.S.A.">
        <title>Extensive mosaic structure revealed by the complete genome sequence of uropathogenic Escherichia coli.</title>
        <authorList>
            <person name="Welch R.A."/>
            <person name="Burland V."/>
            <person name="Plunkett G. III"/>
            <person name="Redford P."/>
            <person name="Roesch P."/>
            <person name="Rasko D."/>
            <person name="Buckles E.L."/>
            <person name="Liou S.-R."/>
            <person name="Boutin A."/>
            <person name="Hackett J."/>
            <person name="Stroud D."/>
            <person name="Mayhew G.F."/>
            <person name="Rose D.J."/>
            <person name="Zhou S."/>
            <person name="Schwartz D.C."/>
            <person name="Perna N.T."/>
            <person name="Mobley H.L.T."/>
            <person name="Donnenberg M.S."/>
            <person name="Blattner F.R."/>
        </authorList>
    </citation>
    <scope>NUCLEOTIDE SEQUENCE [LARGE SCALE GENOMIC DNA]</scope>
    <source>
        <strain>CFT073 / ATCC 700928 / UPEC</strain>
    </source>
</reference>
<evidence type="ECO:0000250" key="1"/>
<evidence type="ECO:0000255" key="2"/>
<evidence type="ECO:0000305" key="3"/>
<protein>
    <recommendedName>
        <fullName>UPF0324 inner membrane protein YeiH</fullName>
    </recommendedName>
</protein>
<name>YEIH_ECOL6</name>
<comment type="subcellular location">
    <subcellularLocation>
        <location evidence="1">Cell inner membrane</location>
        <topology evidence="1">Multi-pass membrane protein</topology>
    </subcellularLocation>
</comment>
<comment type="similarity">
    <text evidence="3">Belongs to the UPF0324 family.</text>
</comment>
<proteinExistence type="inferred from homology"/>
<keyword id="KW-0997">Cell inner membrane</keyword>
<keyword id="KW-1003">Cell membrane</keyword>
<keyword id="KW-0472">Membrane</keyword>
<keyword id="KW-1185">Reference proteome</keyword>
<keyword id="KW-0812">Transmembrane</keyword>
<keyword id="KW-1133">Transmembrane helix</keyword>
<organism>
    <name type="scientific">Escherichia coli O6:H1 (strain CFT073 / ATCC 700928 / UPEC)</name>
    <dbReference type="NCBI Taxonomy" id="199310"/>
    <lineage>
        <taxon>Bacteria</taxon>
        <taxon>Pseudomonadati</taxon>
        <taxon>Pseudomonadota</taxon>
        <taxon>Gammaproteobacteria</taxon>
        <taxon>Enterobacterales</taxon>
        <taxon>Enterobacteriaceae</taxon>
        <taxon>Escherichia</taxon>
    </lineage>
</organism>
<feature type="chain" id="PRO_0000157416" description="UPF0324 inner membrane protein YeiH">
    <location>
        <begin position="1"/>
        <end position="349"/>
    </location>
</feature>
<feature type="topological domain" description="Periplasmic" evidence="2">
    <location>
        <begin position="1"/>
        <end position="12"/>
    </location>
</feature>
<feature type="transmembrane region" description="Helical" evidence="2">
    <location>
        <begin position="13"/>
        <end position="32"/>
    </location>
</feature>
<feature type="topological domain" description="Cytoplasmic" evidence="2">
    <location>
        <begin position="33"/>
        <end position="35"/>
    </location>
</feature>
<feature type="transmembrane region" description="Helical" evidence="2">
    <location>
        <begin position="36"/>
        <end position="58"/>
    </location>
</feature>
<feature type="topological domain" description="Periplasmic" evidence="2">
    <location>
        <begin position="59"/>
        <end position="99"/>
    </location>
</feature>
<feature type="transmembrane region" description="Helical" evidence="2">
    <location>
        <begin position="100"/>
        <end position="122"/>
    </location>
</feature>
<feature type="topological domain" description="Cytoplasmic" evidence="2">
    <location>
        <begin position="123"/>
        <end position="131"/>
    </location>
</feature>
<feature type="transmembrane region" description="Helical" evidence="2">
    <location>
        <begin position="132"/>
        <end position="151"/>
    </location>
</feature>
<feature type="topological domain" description="Periplasmic" evidence="2">
    <location>
        <begin position="152"/>
        <end position="162"/>
    </location>
</feature>
<feature type="transmembrane region" description="Helical" evidence="2">
    <location>
        <begin position="163"/>
        <end position="185"/>
    </location>
</feature>
<feature type="topological domain" description="Cytoplasmic" evidence="2">
    <location>
        <begin position="186"/>
        <end position="261"/>
    </location>
</feature>
<feature type="transmembrane region" description="Helical" evidence="2">
    <location>
        <begin position="262"/>
        <end position="283"/>
    </location>
</feature>
<feature type="topological domain" description="Periplasmic" evidence="2">
    <location>
        <begin position="284"/>
        <end position="289"/>
    </location>
</feature>
<feature type="transmembrane region" description="Helical" evidence="2">
    <location>
        <begin position="290"/>
        <end position="312"/>
    </location>
</feature>
<feature type="topological domain" description="Cytoplasmic" evidence="2">
    <location>
        <begin position="313"/>
        <end position="321"/>
    </location>
</feature>
<feature type="transmembrane region" description="Helical" evidence="2">
    <location>
        <begin position="322"/>
        <end position="344"/>
    </location>
</feature>
<feature type="topological domain" description="Periplasmic" evidence="2">
    <location>
        <begin position="345"/>
        <end position="349"/>
    </location>
</feature>
<accession>Q8FFU1</accession>
<sequence length="349" mass="36912">MTNITLQKQHRTLWHFIPGLALSAVITGVALWGGSIPAVAGAGFSALTLAILLGMVLGNTIYPHIWKSCDGGVLFAKQYLLRLGIILYGFRLTFSQIADVGISGIIIDVLTLSSTFLLACFLGQKVFGLDKHTSWLIGAGSSICGAAAVLATEPVVKAEASKVTVAVATVVIFGTVAIFLYPAIYPLMSQWFSPETFGIYIGSTVHEVAQVVAAGHAISPDAENAAVISKMLRVMMLAPFLILLAARVKQLSGTNSGEKSKITIPWFAILFIVVAIFNSFHLLPQSVVNMLVTLDTFLLAMAMAALGLTTHVSALKKAGAKPLLMALVLFAWLIVGGGAINYVIQSVIA</sequence>